<keyword id="KW-0123">Cardiotoxin</keyword>
<keyword id="KW-0204">Cytolysis</keyword>
<keyword id="KW-0903">Direct protein sequencing</keyword>
<keyword id="KW-1015">Disulfide bond</keyword>
<keyword id="KW-0472">Membrane</keyword>
<keyword id="KW-0964">Secreted</keyword>
<keyword id="KW-1052">Target cell membrane</keyword>
<keyword id="KW-1053">Target membrane</keyword>
<keyword id="KW-0800">Toxin</keyword>
<organism>
    <name type="scientific">Naja annulifera</name>
    <name type="common">Banded Egyptian cobra</name>
    <name type="synonym">Naja haje annulifera</name>
    <dbReference type="NCBI Taxonomy" id="96794"/>
    <lineage>
        <taxon>Eukaryota</taxon>
        <taxon>Metazoa</taxon>
        <taxon>Chordata</taxon>
        <taxon>Craniata</taxon>
        <taxon>Vertebrata</taxon>
        <taxon>Euteleostomi</taxon>
        <taxon>Lepidosauria</taxon>
        <taxon>Squamata</taxon>
        <taxon>Bifurcata</taxon>
        <taxon>Unidentata</taxon>
        <taxon>Episquamata</taxon>
        <taxon>Toxicofera</taxon>
        <taxon>Serpentes</taxon>
        <taxon>Colubroidea</taxon>
        <taxon>Elapidae</taxon>
        <taxon>Elapinae</taxon>
        <taxon>Naja</taxon>
    </lineage>
</organism>
<dbReference type="PIR" id="B01727">
    <property type="entry name" value="H3NJ6E"/>
</dbReference>
<dbReference type="PIR" id="C01727">
    <property type="entry name" value="H3NJ6M"/>
</dbReference>
<dbReference type="SMR" id="P01465"/>
<dbReference type="GO" id="GO:0005576">
    <property type="term" value="C:extracellular region"/>
    <property type="evidence" value="ECO:0007669"/>
    <property type="project" value="UniProtKB-SubCell"/>
</dbReference>
<dbReference type="GO" id="GO:0016020">
    <property type="term" value="C:membrane"/>
    <property type="evidence" value="ECO:0007669"/>
    <property type="project" value="UniProtKB-KW"/>
</dbReference>
<dbReference type="GO" id="GO:0044218">
    <property type="term" value="C:other organism cell membrane"/>
    <property type="evidence" value="ECO:0007669"/>
    <property type="project" value="UniProtKB-KW"/>
</dbReference>
<dbReference type="GO" id="GO:0090729">
    <property type="term" value="F:toxin activity"/>
    <property type="evidence" value="ECO:0007669"/>
    <property type="project" value="UniProtKB-KW"/>
</dbReference>
<dbReference type="GO" id="GO:0031640">
    <property type="term" value="P:killing of cells of another organism"/>
    <property type="evidence" value="ECO:0007669"/>
    <property type="project" value="UniProtKB-KW"/>
</dbReference>
<dbReference type="CDD" id="cd00206">
    <property type="entry name" value="TFP_snake_toxin"/>
    <property type="match status" value="1"/>
</dbReference>
<dbReference type="FunFam" id="2.10.60.10:FF:000024">
    <property type="entry name" value="Cytotoxin 1"/>
    <property type="match status" value="1"/>
</dbReference>
<dbReference type="Gene3D" id="2.10.60.10">
    <property type="entry name" value="CD59"/>
    <property type="match status" value="1"/>
</dbReference>
<dbReference type="InterPro" id="IPR003572">
    <property type="entry name" value="Cytotoxin_Cobra"/>
</dbReference>
<dbReference type="InterPro" id="IPR003571">
    <property type="entry name" value="Snake_3FTx"/>
</dbReference>
<dbReference type="InterPro" id="IPR045860">
    <property type="entry name" value="Snake_toxin-like_sf"/>
</dbReference>
<dbReference type="InterPro" id="IPR018354">
    <property type="entry name" value="Snake_toxin_con_site"/>
</dbReference>
<dbReference type="InterPro" id="IPR054131">
    <property type="entry name" value="Toxin_cobra-type"/>
</dbReference>
<dbReference type="Pfam" id="PF21947">
    <property type="entry name" value="Toxin_cobra-type"/>
    <property type="match status" value="1"/>
</dbReference>
<dbReference type="PRINTS" id="PR00282">
    <property type="entry name" value="CYTOTOXIN"/>
</dbReference>
<dbReference type="SUPFAM" id="SSF57302">
    <property type="entry name" value="Snake toxin-like"/>
    <property type="match status" value="1"/>
</dbReference>
<dbReference type="PROSITE" id="PS00272">
    <property type="entry name" value="SNAKE_TOXIN"/>
    <property type="match status" value="1"/>
</dbReference>
<name>3SA6_NAJHA</name>
<feature type="chain" id="PRO_0000093490" description="Cytotoxin 6" evidence="3">
    <location>
        <begin position="1"/>
        <end position="60"/>
    </location>
</feature>
<feature type="disulfide bond" evidence="1">
    <location>
        <begin position="3"/>
        <end position="21"/>
    </location>
</feature>
<feature type="disulfide bond" evidence="1">
    <location>
        <begin position="14"/>
        <end position="38"/>
    </location>
</feature>
<feature type="disulfide bond" evidence="1">
    <location>
        <begin position="42"/>
        <end position="53"/>
    </location>
</feature>
<feature type="disulfide bond" evidence="1">
    <location>
        <begin position="54"/>
        <end position="59"/>
    </location>
</feature>
<feature type="sequence variant" description="In minor component.">
    <original>M</original>
    <variation>V</variation>
    <location>
        <position position="52"/>
    </location>
</feature>
<feature type="sequence variant" description="In minor component.">
    <original>N</original>
    <variation>S</variation>
    <location>
        <position position="55"/>
    </location>
</feature>
<proteinExistence type="evidence at protein level"/>
<comment type="function">
    <text evidence="1 2">Shows cytolytic activity on many different cells by forming pore in lipid membranes. In vivo, increases heart rate or kills the animal by cardiac arrest. In addition, it binds to heparin with high affinity, interacts with Kv channel-interacting protein 1 (KCNIP1) in a calcium-independent manner, and binds to integrin alpha-V/beta-3 (ITGAV/ITGB3) with moderate affinity.</text>
</comment>
<comment type="subunit">
    <text evidence="1">Monomer in solution; Homodimer and oligomer in the presence of negatively charged lipids forming a pore with a size ranging between 20 and 30 Angstroms.</text>
</comment>
<comment type="subcellular location">
    <subcellularLocation>
        <location evidence="3">Secreted</location>
    </subcellularLocation>
    <subcellularLocation>
        <location evidence="1">Target cell membrane</location>
    </subcellularLocation>
</comment>
<comment type="tissue specificity">
    <text evidence="4">Expressed by the venom gland.</text>
</comment>
<comment type="toxic dose">
    <text evidence="3">LD(50) is 5.09 mg/kg by subcutaneous injection.</text>
</comment>
<comment type="miscellaneous">
    <text evidence="4">Is classified as a P-type cytotoxin, since a proline residue stands at position 30 (Pro-31 in standard classification).</text>
</comment>
<comment type="similarity">
    <text evidence="4">Belongs to the three-finger toxin family. Short-chain subfamily. Type IA cytotoxin sub-subfamily.</text>
</comment>
<reference key="1">
    <citation type="journal article" date="1977" name="Hoppe-Seyler's Z. Physiol. Chem.">
        <title>Snake venom toxin. The amino acid sequence of three toxins (CM-2h, CM-4b and CM-6) from Naja haje annulifera (Egyptian cobra) venom.</title>
        <authorList>
            <person name="Joubert F.J."/>
        </authorList>
    </citation>
    <scope>PROTEIN SEQUENCE</scope>
    <scope>SUBCELLULAR LOCATION</scope>
    <scope>TOXIC DOSE</scope>
    <source>
        <tissue>Venom</tissue>
    </source>
</reference>
<evidence type="ECO:0000250" key="1">
    <source>
        <dbReference type="UniProtKB" id="P60301"/>
    </source>
</evidence>
<evidence type="ECO:0000250" key="2">
    <source>
        <dbReference type="UniProtKB" id="P60304"/>
    </source>
</evidence>
<evidence type="ECO:0000269" key="3">
    <source>
    </source>
</evidence>
<evidence type="ECO:0000305" key="4"/>
<protein>
    <recommendedName>
        <fullName>Cytotoxin 6</fullName>
    </recommendedName>
    <alternativeName>
        <fullName>Toxin CM-2H</fullName>
    </alternativeName>
</protein>
<accession>P01465</accession>
<sequence length="60" mass="6857">LKCHKLVPPFWKTCPEGKNLCYKMYMVATPMLPVKRGCIDVCPKDSALVKYMCCNTNKCN</sequence>